<dbReference type="EC" id="1.1.1.86" evidence="1"/>
<dbReference type="EMBL" id="CP000388">
    <property type="protein sequence ID" value="ABG42754.1"/>
    <property type="molecule type" value="Genomic_DNA"/>
</dbReference>
<dbReference type="RefSeq" id="WP_011576939.1">
    <property type="nucleotide sequence ID" value="NC_008228.1"/>
</dbReference>
<dbReference type="SMR" id="Q15MY4"/>
<dbReference type="STRING" id="342610.Patl_4255"/>
<dbReference type="KEGG" id="pat:Patl_4255"/>
<dbReference type="eggNOG" id="COG0059">
    <property type="taxonomic scope" value="Bacteria"/>
</dbReference>
<dbReference type="HOGENOM" id="CLU_551905_0_0_6"/>
<dbReference type="OrthoDB" id="9804088at2"/>
<dbReference type="UniPathway" id="UPA00047">
    <property type="reaction ID" value="UER00056"/>
</dbReference>
<dbReference type="UniPathway" id="UPA00049">
    <property type="reaction ID" value="UER00060"/>
</dbReference>
<dbReference type="Proteomes" id="UP000001981">
    <property type="component" value="Chromosome"/>
</dbReference>
<dbReference type="GO" id="GO:0005829">
    <property type="term" value="C:cytosol"/>
    <property type="evidence" value="ECO:0007669"/>
    <property type="project" value="TreeGrafter"/>
</dbReference>
<dbReference type="GO" id="GO:0004455">
    <property type="term" value="F:ketol-acid reductoisomerase activity"/>
    <property type="evidence" value="ECO:0007669"/>
    <property type="project" value="UniProtKB-UniRule"/>
</dbReference>
<dbReference type="GO" id="GO:0000287">
    <property type="term" value="F:magnesium ion binding"/>
    <property type="evidence" value="ECO:0007669"/>
    <property type="project" value="UniProtKB-UniRule"/>
</dbReference>
<dbReference type="GO" id="GO:0009097">
    <property type="term" value="P:isoleucine biosynthetic process"/>
    <property type="evidence" value="ECO:0007669"/>
    <property type="project" value="UniProtKB-UniRule"/>
</dbReference>
<dbReference type="GO" id="GO:0009099">
    <property type="term" value="P:L-valine biosynthetic process"/>
    <property type="evidence" value="ECO:0007669"/>
    <property type="project" value="UniProtKB-UniRule"/>
</dbReference>
<dbReference type="Gene3D" id="1.10.1040.10">
    <property type="entry name" value="N-(1-d-carboxylethyl)-l-norvaline Dehydrogenase, domain 2"/>
    <property type="match status" value="1"/>
</dbReference>
<dbReference type="Gene3D" id="3.40.50.720">
    <property type="entry name" value="NAD(P)-binding Rossmann-like Domain"/>
    <property type="match status" value="1"/>
</dbReference>
<dbReference type="HAMAP" id="MF_00435">
    <property type="entry name" value="IlvC"/>
    <property type="match status" value="1"/>
</dbReference>
<dbReference type="InterPro" id="IPR008927">
    <property type="entry name" value="6-PGluconate_DH-like_C_sf"/>
</dbReference>
<dbReference type="InterPro" id="IPR013328">
    <property type="entry name" value="6PGD_dom2"/>
</dbReference>
<dbReference type="InterPro" id="IPR013023">
    <property type="entry name" value="KARI"/>
</dbReference>
<dbReference type="InterPro" id="IPR000506">
    <property type="entry name" value="KARI_C"/>
</dbReference>
<dbReference type="InterPro" id="IPR013116">
    <property type="entry name" value="KARI_N"/>
</dbReference>
<dbReference type="InterPro" id="IPR036291">
    <property type="entry name" value="NAD(P)-bd_dom_sf"/>
</dbReference>
<dbReference type="NCBIfam" id="TIGR00465">
    <property type="entry name" value="ilvC"/>
    <property type="match status" value="1"/>
</dbReference>
<dbReference type="NCBIfam" id="NF003557">
    <property type="entry name" value="PRK05225.1"/>
    <property type="match status" value="1"/>
</dbReference>
<dbReference type="PANTHER" id="PTHR21371">
    <property type="entry name" value="KETOL-ACID REDUCTOISOMERASE, MITOCHONDRIAL"/>
    <property type="match status" value="1"/>
</dbReference>
<dbReference type="PANTHER" id="PTHR21371:SF1">
    <property type="entry name" value="KETOL-ACID REDUCTOISOMERASE, MITOCHONDRIAL"/>
    <property type="match status" value="1"/>
</dbReference>
<dbReference type="Pfam" id="PF01450">
    <property type="entry name" value="KARI_C"/>
    <property type="match status" value="2"/>
</dbReference>
<dbReference type="Pfam" id="PF07991">
    <property type="entry name" value="KARI_N"/>
    <property type="match status" value="1"/>
</dbReference>
<dbReference type="SUPFAM" id="SSF48179">
    <property type="entry name" value="6-phosphogluconate dehydrogenase C-terminal domain-like"/>
    <property type="match status" value="2"/>
</dbReference>
<dbReference type="SUPFAM" id="SSF51735">
    <property type="entry name" value="NAD(P)-binding Rossmann-fold domains"/>
    <property type="match status" value="1"/>
</dbReference>
<dbReference type="PROSITE" id="PS51851">
    <property type="entry name" value="KARI_C"/>
    <property type="match status" value="2"/>
</dbReference>
<dbReference type="PROSITE" id="PS51850">
    <property type="entry name" value="KARI_N"/>
    <property type="match status" value="1"/>
</dbReference>
<protein>
    <recommendedName>
        <fullName evidence="1">Ketol-acid reductoisomerase (NADP(+))</fullName>
        <shortName evidence="1">KARI</shortName>
        <ecNumber evidence="1">1.1.1.86</ecNumber>
    </recommendedName>
    <alternativeName>
        <fullName evidence="1">Acetohydroxy-acid isomeroreductase</fullName>
        <shortName evidence="1">AHIR</shortName>
    </alternativeName>
    <alternativeName>
        <fullName evidence="1">Alpha-keto-beta-hydroxylacyl reductoisomerase</fullName>
    </alternativeName>
    <alternativeName>
        <fullName evidence="1">Ketol-acid reductoisomerase type 2</fullName>
    </alternativeName>
    <alternativeName>
        <fullName evidence="1">Ketol-acid reductoisomerase type II</fullName>
    </alternativeName>
</protein>
<name>ILVC_PSEA6</name>
<feature type="chain" id="PRO_1000124322" description="Ketol-acid reductoisomerase (NADP(+))">
    <location>
        <begin position="1"/>
        <end position="494"/>
    </location>
</feature>
<feature type="domain" description="KARI N-terminal Rossmann" evidence="2">
    <location>
        <begin position="14"/>
        <end position="208"/>
    </location>
</feature>
<feature type="domain" description="KARI C-terminal knotted 1" evidence="3">
    <location>
        <begin position="209"/>
        <end position="344"/>
    </location>
</feature>
<feature type="domain" description="KARI C-terminal knotted 2" evidence="3">
    <location>
        <begin position="345"/>
        <end position="487"/>
    </location>
</feature>
<feature type="active site" evidence="1">
    <location>
        <position position="132"/>
    </location>
</feature>
<feature type="binding site" evidence="1">
    <location>
        <begin position="45"/>
        <end position="48"/>
    </location>
    <ligand>
        <name>NADP(+)</name>
        <dbReference type="ChEBI" id="CHEBI:58349"/>
    </ligand>
</feature>
<feature type="binding site" evidence="1">
    <location>
        <position position="68"/>
    </location>
    <ligand>
        <name>NADP(+)</name>
        <dbReference type="ChEBI" id="CHEBI:58349"/>
    </ligand>
</feature>
<feature type="binding site" evidence="1">
    <location>
        <position position="76"/>
    </location>
    <ligand>
        <name>NADP(+)</name>
        <dbReference type="ChEBI" id="CHEBI:58349"/>
    </ligand>
</feature>
<feature type="binding site" evidence="1">
    <location>
        <position position="78"/>
    </location>
    <ligand>
        <name>NADP(+)</name>
        <dbReference type="ChEBI" id="CHEBI:58349"/>
    </ligand>
</feature>
<feature type="binding site" evidence="1">
    <location>
        <begin position="108"/>
        <end position="110"/>
    </location>
    <ligand>
        <name>NADP(+)</name>
        <dbReference type="ChEBI" id="CHEBI:58349"/>
    </ligand>
</feature>
<feature type="binding site" evidence="1">
    <location>
        <position position="158"/>
    </location>
    <ligand>
        <name>NADP(+)</name>
        <dbReference type="ChEBI" id="CHEBI:58349"/>
    </ligand>
</feature>
<feature type="binding site" evidence="1">
    <location>
        <position position="217"/>
    </location>
    <ligand>
        <name>Mg(2+)</name>
        <dbReference type="ChEBI" id="CHEBI:18420"/>
        <label>1</label>
    </ligand>
</feature>
<feature type="binding site" evidence="1">
    <location>
        <position position="217"/>
    </location>
    <ligand>
        <name>Mg(2+)</name>
        <dbReference type="ChEBI" id="CHEBI:18420"/>
        <label>2</label>
    </ligand>
</feature>
<feature type="binding site" evidence="1">
    <location>
        <position position="221"/>
    </location>
    <ligand>
        <name>Mg(2+)</name>
        <dbReference type="ChEBI" id="CHEBI:18420"/>
        <label>1</label>
    </ligand>
</feature>
<feature type="binding site" evidence="1">
    <location>
        <position position="389"/>
    </location>
    <ligand>
        <name>Mg(2+)</name>
        <dbReference type="ChEBI" id="CHEBI:18420"/>
        <label>2</label>
    </ligand>
</feature>
<feature type="binding site" evidence="1">
    <location>
        <position position="393"/>
    </location>
    <ligand>
        <name>Mg(2+)</name>
        <dbReference type="ChEBI" id="CHEBI:18420"/>
        <label>2</label>
    </ligand>
</feature>
<feature type="binding site" evidence="1">
    <location>
        <position position="414"/>
    </location>
    <ligand>
        <name>substrate</name>
    </ligand>
</feature>
<sequence>MANYFNTLSLRQQLDQIGRCRFMQRSEFSEGCDFLKGKKIVIVGCGAQGLNQGLNMRDSGLDVAYALRQAAIDEKRDSFQRASGNGFTVGTYKELIPSADLVYNLTPDKQHSSVVEAIMPLMKEGASLGYSHGFNIVEEGQQIRSDITVVMCAPKCPGTEVREEYKRGFGVPTLIAVHPENDPQQQGWDIAKALASATGGDRAGVLESSFVAEVKSDLMGEQTILCGMQQAAAVLGYEKMVADGIDPAYAGALIQFGLEAITEALKIGGVTNMMDRLSNPAKIKAFDLSEQLKDMLKPLFGKHQDDIISGEFSRTMMEDWANGDANLLKWREETGQTGFENAPEYNGKIDEQEFFDNGVFIVAMIKAGVELAFDVMVEAGILPESAYYESLHETPLISNTIARKRLYEMNVVISDTAEYGNYLFANAAIPLLADKLMPSIGTELIGKPFAAASNSVDNKTLVAVNKAIREHGVESVGDTLRGYMTDMKAIVEAV</sequence>
<gene>
    <name evidence="1" type="primary">ilvC</name>
    <name type="ordered locus">Patl_4255</name>
</gene>
<keyword id="KW-0028">Amino-acid biosynthesis</keyword>
<keyword id="KW-0100">Branched-chain amino acid biosynthesis</keyword>
<keyword id="KW-0460">Magnesium</keyword>
<keyword id="KW-0479">Metal-binding</keyword>
<keyword id="KW-0521">NADP</keyword>
<keyword id="KW-0560">Oxidoreductase</keyword>
<keyword id="KW-0677">Repeat</keyword>
<organism>
    <name type="scientific">Pseudoalteromonas atlantica (strain T6c / ATCC BAA-1087)</name>
    <dbReference type="NCBI Taxonomy" id="3042615"/>
    <lineage>
        <taxon>Bacteria</taxon>
        <taxon>Pseudomonadati</taxon>
        <taxon>Pseudomonadota</taxon>
        <taxon>Gammaproteobacteria</taxon>
        <taxon>Alteromonadales</taxon>
        <taxon>Alteromonadaceae</taxon>
        <taxon>Paraglaciecola</taxon>
    </lineage>
</organism>
<reference key="1">
    <citation type="submission" date="2006-06" db="EMBL/GenBank/DDBJ databases">
        <title>Complete sequence of Pseudoalteromonas atlantica T6c.</title>
        <authorList>
            <consortium name="US DOE Joint Genome Institute"/>
            <person name="Copeland A."/>
            <person name="Lucas S."/>
            <person name="Lapidus A."/>
            <person name="Barry K."/>
            <person name="Detter J.C."/>
            <person name="Glavina del Rio T."/>
            <person name="Hammon N."/>
            <person name="Israni S."/>
            <person name="Dalin E."/>
            <person name="Tice H."/>
            <person name="Pitluck S."/>
            <person name="Saunders E."/>
            <person name="Brettin T."/>
            <person name="Bruce D."/>
            <person name="Han C."/>
            <person name="Tapia R."/>
            <person name="Gilna P."/>
            <person name="Schmutz J."/>
            <person name="Larimer F."/>
            <person name="Land M."/>
            <person name="Hauser L."/>
            <person name="Kyrpides N."/>
            <person name="Kim E."/>
            <person name="Karls A.C."/>
            <person name="Bartlett D."/>
            <person name="Higgins B.P."/>
            <person name="Richardson P."/>
        </authorList>
    </citation>
    <scope>NUCLEOTIDE SEQUENCE [LARGE SCALE GENOMIC DNA]</scope>
    <source>
        <strain>T6c / ATCC BAA-1087</strain>
    </source>
</reference>
<accession>Q15MY4</accession>
<evidence type="ECO:0000255" key="1">
    <source>
        <dbReference type="HAMAP-Rule" id="MF_00435"/>
    </source>
</evidence>
<evidence type="ECO:0000255" key="2">
    <source>
        <dbReference type="PROSITE-ProRule" id="PRU01197"/>
    </source>
</evidence>
<evidence type="ECO:0000255" key="3">
    <source>
        <dbReference type="PROSITE-ProRule" id="PRU01198"/>
    </source>
</evidence>
<comment type="function">
    <text evidence="1">Involved in the biosynthesis of branched-chain amino acids (BCAA). Catalyzes an alkyl-migration followed by a ketol-acid reduction of (S)-2-acetolactate (S2AL) to yield (R)-2,3-dihydroxy-isovalerate. In the isomerase reaction, S2AL is rearranged via a Mg-dependent methyl migration to produce 3-hydroxy-3-methyl-2-ketobutyrate (HMKB). In the reductase reaction, this 2-ketoacid undergoes a metal-dependent reduction by NADPH to yield (R)-2,3-dihydroxy-isovalerate.</text>
</comment>
<comment type="catalytic activity">
    <reaction evidence="1">
        <text>(2R)-2,3-dihydroxy-3-methylbutanoate + NADP(+) = (2S)-2-acetolactate + NADPH + H(+)</text>
        <dbReference type="Rhea" id="RHEA:22068"/>
        <dbReference type="ChEBI" id="CHEBI:15378"/>
        <dbReference type="ChEBI" id="CHEBI:49072"/>
        <dbReference type="ChEBI" id="CHEBI:57783"/>
        <dbReference type="ChEBI" id="CHEBI:58349"/>
        <dbReference type="ChEBI" id="CHEBI:58476"/>
        <dbReference type="EC" id="1.1.1.86"/>
    </reaction>
</comment>
<comment type="catalytic activity">
    <reaction evidence="1">
        <text>(2R,3R)-2,3-dihydroxy-3-methylpentanoate + NADP(+) = (S)-2-ethyl-2-hydroxy-3-oxobutanoate + NADPH + H(+)</text>
        <dbReference type="Rhea" id="RHEA:13493"/>
        <dbReference type="ChEBI" id="CHEBI:15378"/>
        <dbReference type="ChEBI" id="CHEBI:49256"/>
        <dbReference type="ChEBI" id="CHEBI:49258"/>
        <dbReference type="ChEBI" id="CHEBI:57783"/>
        <dbReference type="ChEBI" id="CHEBI:58349"/>
        <dbReference type="EC" id="1.1.1.86"/>
    </reaction>
</comment>
<comment type="cofactor">
    <cofactor evidence="1">
        <name>Mg(2+)</name>
        <dbReference type="ChEBI" id="CHEBI:18420"/>
    </cofactor>
    <text evidence="1">Binds 2 magnesium ions per subunit.</text>
</comment>
<comment type="pathway">
    <text evidence="1">Amino-acid biosynthesis; L-isoleucine biosynthesis; L-isoleucine from 2-oxobutanoate: step 2/4.</text>
</comment>
<comment type="pathway">
    <text evidence="1">Amino-acid biosynthesis; L-valine biosynthesis; L-valine from pyruvate: step 2/4.</text>
</comment>
<comment type="similarity">
    <text evidence="1">Belongs to the ketol-acid reductoisomerase family.</text>
</comment>
<proteinExistence type="inferred from homology"/>